<gene>
    <name evidence="1" type="primary">hslU</name>
    <name type="ordered locus">SeHA_C4423</name>
</gene>
<comment type="function">
    <text evidence="1">ATPase subunit of a proteasome-like degradation complex; this subunit has chaperone activity. The binding of ATP and its subsequent hydrolysis by HslU are essential for unfolding of protein substrates subsequently hydrolyzed by HslV. HslU recognizes the N-terminal part of its protein substrates and unfolds these before they are guided to HslV for hydrolysis.</text>
</comment>
<comment type="subunit">
    <text evidence="1">A double ring-shaped homohexamer of HslV is capped on each side by a ring-shaped HslU homohexamer. The assembly of the HslU/HslV complex is dependent on binding of ATP.</text>
</comment>
<comment type="subcellular location">
    <subcellularLocation>
        <location evidence="1">Cytoplasm</location>
    </subcellularLocation>
</comment>
<comment type="induction">
    <text evidence="1">By heat shock.</text>
</comment>
<comment type="similarity">
    <text evidence="1">Belongs to the ClpX chaperone family. HslU subfamily.</text>
</comment>
<organism>
    <name type="scientific">Salmonella heidelberg (strain SL476)</name>
    <dbReference type="NCBI Taxonomy" id="454169"/>
    <lineage>
        <taxon>Bacteria</taxon>
        <taxon>Pseudomonadati</taxon>
        <taxon>Pseudomonadota</taxon>
        <taxon>Gammaproteobacteria</taxon>
        <taxon>Enterobacterales</taxon>
        <taxon>Enterobacteriaceae</taxon>
        <taxon>Salmonella</taxon>
    </lineage>
</organism>
<evidence type="ECO:0000255" key="1">
    <source>
        <dbReference type="HAMAP-Rule" id="MF_00249"/>
    </source>
</evidence>
<feature type="chain" id="PRO_1000100972" description="ATP-dependent protease ATPase subunit HslU">
    <location>
        <begin position="1"/>
        <end position="443"/>
    </location>
</feature>
<feature type="binding site" evidence="1">
    <location>
        <position position="18"/>
    </location>
    <ligand>
        <name>ATP</name>
        <dbReference type="ChEBI" id="CHEBI:30616"/>
    </ligand>
</feature>
<feature type="binding site" evidence="1">
    <location>
        <begin position="60"/>
        <end position="65"/>
    </location>
    <ligand>
        <name>ATP</name>
        <dbReference type="ChEBI" id="CHEBI:30616"/>
    </ligand>
</feature>
<feature type="binding site" evidence="1">
    <location>
        <position position="256"/>
    </location>
    <ligand>
        <name>ATP</name>
        <dbReference type="ChEBI" id="CHEBI:30616"/>
    </ligand>
</feature>
<feature type="binding site" evidence="1">
    <location>
        <position position="321"/>
    </location>
    <ligand>
        <name>ATP</name>
        <dbReference type="ChEBI" id="CHEBI:30616"/>
    </ligand>
</feature>
<feature type="binding site" evidence="1">
    <location>
        <position position="393"/>
    </location>
    <ligand>
        <name>ATP</name>
        <dbReference type="ChEBI" id="CHEBI:30616"/>
    </ligand>
</feature>
<reference key="1">
    <citation type="journal article" date="2011" name="J. Bacteriol.">
        <title>Comparative genomics of 28 Salmonella enterica isolates: evidence for CRISPR-mediated adaptive sublineage evolution.</title>
        <authorList>
            <person name="Fricke W.F."/>
            <person name="Mammel M.K."/>
            <person name="McDermott P.F."/>
            <person name="Tartera C."/>
            <person name="White D.G."/>
            <person name="Leclerc J.E."/>
            <person name="Ravel J."/>
            <person name="Cebula T.A."/>
        </authorList>
    </citation>
    <scope>NUCLEOTIDE SEQUENCE [LARGE SCALE GENOMIC DNA]</scope>
    <source>
        <strain>SL476</strain>
    </source>
</reference>
<dbReference type="EMBL" id="CP001120">
    <property type="protein sequence ID" value="ACF67820.1"/>
    <property type="molecule type" value="Genomic_DNA"/>
</dbReference>
<dbReference type="RefSeq" id="WP_001293360.1">
    <property type="nucleotide sequence ID" value="NC_011083.1"/>
</dbReference>
<dbReference type="SMR" id="B4TCM8"/>
<dbReference type="KEGG" id="seh:SeHA_C4423"/>
<dbReference type="HOGENOM" id="CLU_033123_0_0_6"/>
<dbReference type="Proteomes" id="UP000001866">
    <property type="component" value="Chromosome"/>
</dbReference>
<dbReference type="GO" id="GO:0009376">
    <property type="term" value="C:HslUV protease complex"/>
    <property type="evidence" value="ECO:0007669"/>
    <property type="project" value="UniProtKB-UniRule"/>
</dbReference>
<dbReference type="GO" id="GO:0005524">
    <property type="term" value="F:ATP binding"/>
    <property type="evidence" value="ECO:0007669"/>
    <property type="project" value="UniProtKB-UniRule"/>
</dbReference>
<dbReference type="GO" id="GO:0016887">
    <property type="term" value="F:ATP hydrolysis activity"/>
    <property type="evidence" value="ECO:0007669"/>
    <property type="project" value="InterPro"/>
</dbReference>
<dbReference type="GO" id="GO:0008233">
    <property type="term" value="F:peptidase activity"/>
    <property type="evidence" value="ECO:0007669"/>
    <property type="project" value="InterPro"/>
</dbReference>
<dbReference type="GO" id="GO:0036402">
    <property type="term" value="F:proteasome-activating activity"/>
    <property type="evidence" value="ECO:0007669"/>
    <property type="project" value="UniProtKB-UniRule"/>
</dbReference>
<dbReference type="GO" id="GO:0043335">
    <property type="term" value="P:protein unfolding"/>
    <property type="evidence" value="ECO:0007669"/>
    <property type="project" value="UniProtKB-UniRule"/>
</dbReference>
<dbReference type="GO" id="GO:0051603">
    <property type="term" value="P:proteolysis involved in protein catabolic process"/>
    <property type="evidence" value="ECO:0007669"/>
    <property type="project" value="TreeGrafter"/>
</dbReference>
<dbReference type="CDD" id="cd19498">
    <property type="entry name" value="RecA-like_HslU"/>
    <property type="match status" value="1"/>
</dbReference>
<dbReference type="FunFam" id="1.10.8.10:FF:000012">
    <property type="entry name" value="ATP-dependent protease ATPase subunit HslU"/>
    <property type="match status" value="1"/>
</dbReference>
<dbReference type="FunFam" id="1.10.8.10:FF:000028">
    <property type="entry name" value="ATP-dependent protease ATPase subunit HslU"/>
    <property type="match status" value="1"/>
</dbReference>
<dbReference type="FunFam" id="1.10.8.60:FF:000027">
    <property type="entry name" value="ATP-dependent protease ATPase subunit HslU"/>
    <property type="match status" value="1"/>
</dbReference>
<dbReference type="FunFam" id="3.40.50.300:FF:000213">
    <property type="entry name" value="ATP-dependent protease ATPase subunit HslU"/>
    <property type="match status" value="1"/>
</dbReference>
<dbReference type="FunFam" id="3.40.50.300:FF:000220">
    <property type="entry name" value="ATP-dependent protease ATPase subunit HslU"/>
    <property type="match status" value="1"/>
</dbReference>
<dbReference type="Gene3D" id="1.10.8.60">
    <property type="match status" value="1"/>
</dbReference>
<dbReference type="Gene3D" id="1.10.8.10">
    <property type="entry name" value="DNA helicase RuvA subunit, C-terminal domain"/>
    <property type="match status" value="2"/>
</dbReference>
<dbReference type="Gene3D" id="3.40.50.300">
    <property type="entry name" value="P-loop containing nucleotide triphosphate hydrolases"/>
    <property type="match status" value="1"/>
</dbReference>
<dbReference type="HAMAP" id="MF_00249">
    <property type="entry name" value="HslU"/>
    <property type="match status" value="1"/>
</dbReference>
<dbReference type="InterPro" id="IPR003593">
    <property type="entry name" value="AAA+_ATPase"/>
</dbReference>
<dbReference type="InterPro" id="IPR050052">
    <property type="entry name" value="ATP-dep_Clp_protease_ClpX"/>
</dbReference>
<dbReference type="InterPro" id="IPR003959">
    <property type="entry name" value="ATPase_AAA_core"/>
</dbReference>
<dbReference type="InterPro" id="IPR019489">
    <property type="entry name" value="Clp_ATPase_C"/>
</dbReference>
<dbReference type="InterPro" id="IPR004491">
    <property type="entry name" value="HslU"/>
</dbReference>
<dbReference type="InterPro" id="IPR027417">
    <property type="entry name" value="P-loop_NTPase"/>
</dbReference>
<dbReference type="NCBIfam" id="TIGR00390">
    <property type="entry name" value="hslU"/>
    <property type="match status" value="1"/>
</dbReference>
<dbReference type="NCBIfam" id="NF003544">
    <property type="entry name" value="PRK05201.1"/>
    <property type="match status" value="1"/>
</dbReference>
<dbReference type="PANTHER" id="PTHR48102">
    <property type="entry name" value="ATP-DEPENDENT CLP PROTEASE ATP-BINDING SUBUNIT CLPX-LIKE, MITOCHONDRIAL-RELATED"/>
    <property type="match status" value="1"/>
</dbReference>
<dbReference type="PANTHER" id="PTHR48102:SF3">
    <property type="entry name" value="ATP-DEPENDENT PROTEASE ATPASE SUBUNIT HSLU"/>
    <property type="match status" value="1"/>
</dbReference>
<dbReference type="Pfam" id="PF00004">
    <property type="entry name" value="AAA"/>
    <property type="match status" value="1"/>
</dbReference>
<dbReference type="Pfam" id="PF07724">
    <property type="entry name" value="AAA_2"/>
    <property type="match status" value="1"/>
</dbReference>
<dbReference type="SMART" id="SM00382">
    <property type="entry name" value="AAA"/>
    <property type="match status" value="1"/>
</dbReference>
<dbReference type="SMART" id="SM01086">
    <property type="entry name" value="ClpB_D2-small"/>
    <property type="match status" value="1"/>
</dbReference>
<dbReference type="SUPFAM" id="SSF52540">
    <property type="entry name" value="P-loop containing nucleoside triphosphate hydrolases"/>
    <property type="match status" value="1"/>
</dbReference>
<keyword id="KW-0067">ATP-binding</keyword>
<keyword id="KW-0143">Chaperone</keyword>
<keyword id="KW-0963">Cytoplasm</keyword>
<keyword id="KW-0547">Nucleotide-binding</keyword>
<keyword id="KW-0346">Stress response</keyword>
<sequence>MSEMTPREIVSELNKHIIGQDNAKRSVAIALRNRWRRMQLDEELRHEVTPKNILMIGPTGVGKTEIARRLAKLANAPFIKVEATKFTEVGYVGKEVDSIIRDLTDAAVKMVRVQAIEKNRYRAEELAEERILDVLIPPAKNNWGQAEQQQEPSAARQTFRKKLREGQLDDKEIEINLAAAPMGVEIMAPPGMEEMTSQLQSMFQNLGGQKQKPRKLKIKDAMKLLVEEEAAKLVNPEELKQDAIDAVEQHGIVFIDEIDKICKRGETSGPDVSREGVQRDLLPLVEGCTVSTKHGMVKTDHILFIASGAFQVAKPSDLIPELQGRLPIRVELQALTTSDFERILTEPNASVTVQYKALMATEGVNIEFTDSGIKRIAEAAWQVNETTENIGARRLHTVLERLMEEISYNASDLHGQNITIDAEYVSKHLDALVADEDLSRFIL</sequence>
<proteinExistence type="inferred from homology"/>
<accession>B4TCM8</accession>
<protein>
    <recommendedName>
        <fullName evidence="1">ATP-dependent protease ATPase subunit HslU</fullName>
    </recommendedName>
    <alternativeName>
        <fullName evidence="1">Heat shock protein HslU</fullName>
    </alternativeName>
    <alternativeName>
        <fullName evidence="1">Unfoldase HslU</fullName>
    </alternativeName>
</protein>
<name>HSLU_SALHS</name>